<proteinExistence type="inferred from homology"/>
<evidence type="ECO:0000255" key="1">
    <source>
        <dbReference type="HAMAP-Rule" id="MF_00003"/>
    </source>
</evidence>
<evidence type="ECO:0000256" key="2">
    <source>
        <dbReference type="SAM" id="MobiDB-lite"/>
    </source>
</evidence>
<dbReference type="EMBL" id="CP000611">
    <property type="protein sequence ID" value="ABQ74640.1"/>
    <property type="molecule type" value="Genomic_DNA"/>
</dbReference>
<dbReference type="RefSeq" id="WP_003414508.1">
    <property type="nucleotide sequence ID" value="NZ_CP016972.1"/>
</dbReference>
<dbReference type="SMR" id="A5U6J0"/>
<dbReference type="KEGG" id="mra:MRA_2861"/>
<dbReference type="eggNOG" id="COG0858">
    <property type="taxonomic scope" value="Bacteria"/>
</dbReference>
<dbReference type="HOGENOM" id="CLU_089475_0_0_11"/>
<dbReference type="Proteomes" id="UP000001988">
    <property type="component" value="Chromosome"/>
</dbReference>
<dbReference type="GO" id="GO:0005829">
    <property type="term" value="C:cytosol"/>
    <property type="evidence" value="ECO:0007669"/>
    <property type="project" value="TreeGrafter"/>
</dbReference>
<dbReference type="GO" id="GO:0043024">
    <property type="term" value="F:ribosomal small subunit binding"/>
    <property type="evidence" value="ECO:0007669"/>
    <property type="project" value="TreeGrafter"/>
</dbReference>
<dbReference type="GO" id="GO:0030490">
    <property type="term" value="P:maturation of SSU-rRNA"/>
    <property type="evidence" value="ECO:0007669"/>
    <property type="project" value="UniProtKB-UniRule"/>
</dbReference>
<dbReference type="FunFam" id="3.30.300.20:FF:000018">
    <property type="entry name" value="Ribosome-binding factor A"/>
    <property type="match status" value="1"/>
</dbReference>
<dbReference type="Gene3D" id="3.30.300.20">
    <property type="match status" value="1"/>
</dbReference>
<dbReference type="HAMAP" id="MF_00003">
    <property type="entry name" value="RbfA"/>
    <property type="match status" value="1"/>
</dbReference>
<dbReference type="InterPro" id="IPR015946">
    <property type="entry name" value="KH_dom-like_a/b"/>
</dbReference>
<dbReference type="InterPro" id="IPR000238">
    <property type="entry name" value="RbfA"/>
</dbReference>
<dbReference type="InterPro" id="IPR023799">
    <property type="entry name" value="RbfA_dom_sf"/>
</dbReference>
<dbReference type="InterPro" id="IPR020053">
    <property type="entry name" value="Ribosome-bd_factorA_CS"/>
</dbReference>
<dbReference type="NCBIfam" id="TIGR00082">
    <property type="entry name" value="rbfA"/>
    <property type="match status" value="1"/>
</dbReference>
<dbReference type="PANTHER" id="PTHR33515">
    <property type="entry name" value="RIBOSOME-BINDING FACTOR A, CHLOROPLASTIC-RELATED"/>
    <property type="match status" value="1"/>
</dbReference>
<dbReference type="PANTHER" id="PTHR33515:SF1">
    <property type="entry name" value="RIBOSOME-BINDING FACTOR A, CHLOROPLASTIC-RELATED"/>
    <property type="match status" value="1"/>
</dbReference>
<dbReference type="Pfam" id="PF02033">
    <property type="entry name" value="RBFA"/>
    <property type="match status" value="1"/>
</dbReference>
<dbReference type="SUPFAM" id="SSF89919">
    <property type="entry name" value="Ribosome-binding factor A, RbfA"/>
    <property type="match status" value="1"/>
</dbReference>
<dbReference type="PROSITE" id="PS01319">
    <property type="entry name" value="RBFA"/>
    <property type="match status" value="1"/>
</dbReference>
<accession>A5U6J0</accession>
<organism>
    <name type="scientific">Mycobacterium tuberculosis (strain ATCC 25177 / H37Ra)</name>
    <dbReference type="NCBI Taxonomy" id="419947"/>
    <lineage>
        <taxon>Bacteria</taxon>
        <taxon>Bacillati</taxon>
        <taxon>Actinomycetota</taxon>
        <taxon>Actinomycetes</taxon>
        <taxon>Mycobacteriales</taxon>
        <taxon>Mycobacteriaceae</taxon>
        <taxon>Mycobacterium</taxon>
        <taxon>Mycobacterium tuberculosis complex</taxon>
    </lineage>
</organism>
<sequence length="183" mass="18998">MADAARARRLAKRIAAIVASAIEYEIKDPGLAGVTITDAKVTADLHDATVYYTVMGRTLHDEPNCAGAAAALERAKGVLRTKVGAGTGVRFTPTLTFTLDTISDSVHRMDELLARARAADADLARVRVGAKPAGEADPYRDNGSVAQSPAPGGLGIRTSDGPEAVEAPLTCGGDTGDDDRPKE</sequence>
<protein>
    <recommendedName>
        <fullName evidence="1">Ribosome-binding factor A</fullName>
    </recommendedName>
</protein>
<comment type="function">
    <text evidence="1">One of several proteins that assist in the late maturation steps of the functional core of the 30S ribosomal subunit. Associates with free 30S ribosomal subunits (but not with 30S subunits that are part of 70S ribosomes or polysomes). Required for efficient processing of 16S rRNA. May interact with the 5'-terminal helix region of 16S rRNA.</text>
</comment>
<comment type="subunit">
    <text evidence="1">Monomer. Binds 30S ribosomal subunits, but not 50S ribosomal subunits or 70S ribosomes.</text>
</comment>
<comment type="subcellular location">
    <subcellularLocation>
        <location evidence="1">Cytoplasm</location>
    </subcellularLocation>
</comment>
<comment type="similarity">
    <text evidence="1">Belongs to the RbfA family.</text>
</comment>
<name>RBFA_MYCTA</name>
<gene>
    <name evidence="1" type="primary">rbfA</name>
    <name type="ordered locus">MRA_2861</name>
</gene>
<feature type="chain" id="PRO_1000000147" description="Ribosome-binding factor A">
    <location>
        <begin position="1"/>
        <end position="183"/>
    </location>
</feature>
<feature type="region of interest" description="Disordered" evidence="2">
    <location>
        <begin position="132"/>
        <end position="183"/>
    </location>
</feature>
<keyword id="KW-0963">Cytoplasm</keyword>
<keyword id="KW-1185">Reference proteome</keyword>
<keyword id="KW-0690">Ribosome biogenesis</keyword>
<reference key="1">
    <citation type="journal article" date="2008" name="PLoS ONE">
        <title>Genetic basis of virulence attenuation revealed by comparative genomic analysis of Mycobacterium tuberculosis strain H37Ra versus H37Rv.</title>
        <authorList>
            <person name="Zheng H."/>
            <person name="Lu L."/>
            <person name="Wang B."/>
            <person name="Pu S."/>
            <person name="Zhang X."/>
            <person name="Zhu G."/>
            <person name="Shi W."/>
            <person name="Zhang L."/>
            <person name="Wang H."/>
            <person name="Wang S."/>
            <person name="Zhao G."/>
            <person name="Zhang Y."/>
        </authorList>
    </citation>
    <scope>NUCLEOTIDE SEQUENCE [LARGE SCALE GENOMIC DNA]</scope>
    <source>
        <strain>ATCC 25177 / H37Ra</strain>
    </source>
</reference>